<evidence type="ECO:0000269" key="1">
    <source>
    </source>
</evidence>
<evidence type="ECO:0000269" key="2">
    <source>
    </source>
</evidence>
<evidence type="ECO:0000305" key="3"/>
<sequence>MMSLLTPAVLLTQRSHTLTLSVSTPLGLVMTTYESSTLKDARLKLVSQKEVNGKLHLTLGAGRLLYIIRIFLATGTTQFLTMVLPSTASVDSLPGTYLRRC</sequence>
<keyword id="KW-0024">Alternative initiation</keyword>
<keyword id="KW-1262">Eukaryotic host gene expression shutoff by virus</keyword>
<keyword id="KW-1191">Eukaryotic host transcription shutoff by virus</keyword>
<keyword id="KW-1190">Host gene expression shutoff by virus</keyword>
<keyword id="KW-0945">Host-virus interaction</keyword>
<keyword id="KW-1104">Inhibition of host RNA polymerase II by virus</keyword>
<keyword id="KW-1185">Reference proteome</keyword>
<reference key="1">
    <citation type="journal article" date="1989" name="J. Gen. Virol.">
        <title>Nucleotide sequence analysis of the small (S) RNA segment of Bunyamwera virus, the prototype of the family Bunyaviridae.</title>
        <authorList>
            <person name="Elliott R.M."/>
        </authorList>
    </citation>
    <scope>NUCLEOTIDE SEQUENCE [GENOMIC RNA]</scope>
</reference>
<reference key="2">
    <citation type="journal article" date="2004" name="J. Biol. Chem.">
        <title>Inhibition of RNA polymerase II phosphorylation by a viral interferon antagonist.</title>
        <authorList>
            <person name="Thomas D."/>
            <person name="Blakqori G."/>
            <person name="Wagner V."/>
            <person name="Banholzer M."/>
            <person name="Kessler N."/>
            <person name="Elliott R.M."/>
            <person name="Haller O."/>
            <person name="Weber F."/>
        </authorList>
    </citation>
    <scope>FUNCTION</scope>
</reference>
<reference key="3">
    <citation type="journal article" date="2009" name="J. Virol.">
        <title>Bunyamwera orthobunyavirus S-segment untranslated regions mediate poly(A) tail-independent translation.</title>
        <authorList>
            <person name="Blakqori G."/>
            <person name="van Knippenberg I."/>
            <person name="Elliott R.M."/>
        </authorList>
    </citation>
    <scope>FUNCTION</scope>
</reference>
<proteinExistence type="inferred from homology"/>
<feature type="chain" id="PRO_0000221976" description="Non-structural protein NS-S">
    <location>
        <begin position="1"/>
        <end position="101"/>
    </location>
</feature>
<dbReference type="EMBL" id="D00353">
    <property type="protein sequence ID" value="BAA00262.1"/>
    <property type="molecule type" value="Genomic_RNA"/>
</dbReference>
<dbReference type="PIR" id="B31365">
    <property type="entry name" value="MNVUBV"/>
</dbReference>
<dbReference type="RefSeq" id="NP_047214.1">
    <molecule id="P16494-1"/>
    <property type="nucleotide sequence ID" value="NC_001927.1"/>
</dbReference>
<dbReference type="KEGG" id="vg:2648218"/>
<dbReference type="OrthoDB" id="25898at10239"/>
<dbReference type="Proteomes" id="UP000002476">
    <property type="component" value="Genome"/>
</dbReference>
<dbReference type="GO" id="GO:0046725">
    <property type="term" value="P:negative regulation by virus of viral protein levels in host cell"/>
    <property type="evidence" value="ECO:0000315"/>
    <property type="project" value="CACAO"/>
</dbReference>
<dbReference type="GO" id="GO:0039657">
    <property type="term" value="P:symbiont-mediated suppression of host gene expression"/>
    <property type="evidence" value="ECO:0000315"/>
    <property type="project" value="CACAO"/>
</dbReference>
<dbReference type="GO" id="GO:0039523">
    <property type="term" value="P:symbiont-mediated suppression of host mRNA transcription via inhibition of RNA polymerase II activity"/>
    <property type="evidence" value="ECO:0000315"/>
    <property type="project" value="CACAO"/>
</dbReference>
<dbReference type="GO" id="GO:0039502">
    <property type="term" value="P:symbiont-mediated suppression of host type I interferon-mediated signaling pathway"/>
    <property type="evidence" value="ECO:0000314"/>
    <property type="project" value="CACAO"/>
</dbReference>
<dbReference type="GO" id="GO:0019080">
    <property type="term" value="P:viral gene expression"/>
    <property type="evidence" value="ECO:0000315"/>
    <property type="project" value="CACAO"/>
</dbReference>
<dbReference type="InterPro" id="IPR000797">
    <property type="entry name" value="Bunya_NSs"/>
</dbReference>
<dbReference type="Pfam" id="PF01104">
    <property type="entry name" value="Bunya_NS-S"/>
    <property type="match status" value="1"/>
</dbReference>
<dbReference type="PIRSF" id="PIRSF003954">
    <property type="entry name" value="NS-S_OrthobunV"/>
    <property type="match status" value="1"/>
</dbReference>
<name>NSS_BUNYW</name>
<accession>P16494</accession>
<gene>
    <name type="primary">N</name>
</gene>
<organism>
    <name type="scientific">Bunyamwera virus</name>
    <name type="common">BUNV</name>
    <dbReference type="NCBI Taxonomy" id="35304"/>
    <lineage>
        <taxon>Viruses</taxon>
        <taxon>Riboviria</taxon>
        <taxon>Orthornavirae</taxon>
        <taxon>Negarnaviricota</taxon>
        <taxon>Polyploviricotina</taxon>
        <taxon>Ellioviricetes</taxon>
        <taxon>Bunyavirales</taxon>
        <taxon>Peribunyaviridae</taxon>
        <taxon>Orthobunyavirus</taxon>
        <taxon>Orthobunyavirus bunyamweraense</taxon>
    </lineage>
</organism>
<organismHost>
    <name type="scientific">Aedes aegypti</name>
    <name type="common">Yellowfever mosquito</name>
    <name type="synonym">Culex aegypti</name>
    <dbReference type="NCBI Taxonomy" id="7159"/>
</organismHost>
<organismHost>
    <name type="scientific">Homo sapiens</name>
    <name type="common">Human</name>
    <dbReference type="NCBI Taxonomy" id="9606"/>
</organismHost>
<comment type="function">
    <text evidence="1 2">Inhibits host transcriptional machinery, by producing modifications to the phosphorylation state of the C-terminal domain (CTD) of RNA polymerase II. Inhibits phosphorylation at serine 2 in the heptapeptide repeat (YSPTSPS) of the CTD of RNA polymerase II, suggesting that the elongation step of transcription and/or 3'-end processing is prevented. Inhibition of host transcription machinery leads to shut off of host cell protein synthesis and inhibition of the host innate immune response. NSs also seems to be involved in the nuclear relocalization of host PABP1.</text>
</comment>
<comment type="alternative products">
    <event type="alternative initiation"/>
    <isoform>
        <id>P16494-1</id>
        <name>NSS</name>
        <sequence type="displayed"/>
    </isoform>
    <isoform>
        <id>P16495-1</id>
        <name>N</name>
        <sequence type="external"/>
    </isoform>
</comment>
<comment type="miscellaneous">
    <molecule>Isoform NSS</molecule>
    <text>Produced by alternative initiation in the N gene, but encoded on another frame.</text>
</comment>
<comment type="similarity">
    <text evidence="3">Belongs to the orthobunyavirus NS-S protein family.</text>
</comment>
<protein>
    <recommendedName>
        <fullName>Non-structural protein NS-S</fullName>
    </recommendedName>
</protein>